<organism>
    <name type="scientific">Staphylococcus aureus (strain NCTC 8325 / PS 47)</name>
    <dbReference type="NCBI Taxonomy" id="93061"/>
    <lineage>
        <taxon>Bacteria</taxon>
        <taxon>Bacillati</taxon>
        <taxon>Bacillota</taxon>
        <taxon>Bacilli</taxon>
        <taxon>Bacillales</taxon>
        <taxon>Staphylococcaceae</taxon>
        <taxon>Staphylococcus</taxon>
    </lineage>
</organism>
<sequence length="131" mass="14687">MTKKTIYFICTGNSCRSQMAEGWAKQILADDWNVYSAGIETHGVNPKAIEAMKEVGIDISNHTSDLIDNNIIKNSNLVVTLCSDADVNCPSLPTNVKKEHWGFDDPAGKPWSEFQRVRDEIKIAIENFKSR</sequence>
<evidence type="ECO:0000255" key="1">
    <source>
        <dbReference type="HAMAP-Rule" id="MF_01624"/>
    </source>
</evidence>
<name>ARSC_STAA8</name>
<gene>
    <name evidence="1" type="primary">arsC</name>
    <name type="ordered locus">SAOUHSC_01894</name>
</gene>
<feature type="chain" id="PRO_0000290356" description="Arsenate reductase">
    <location>
        <begin position="1"/>
        <end position="131"/>
    </location>
</feature>
<feature type="active site" description="Nucleophile" evidence="1">
    <location>
        <position position="10"/>
    </location>
</feature>
<feature type="active site" description="Nucleophile" evidence="1">
    <location>
        <position position="82"/>
    </location>
</feature>
<feature type="active site" description="Nucleophile" evidence="1">
    <location>
        <position position="89"/>
    </location>
</feature>
<feature type="disulfide bond" description="Redox-active; alternate" evidence="1">
    <location>
        <begin position="10"/>
        <end position="82"/>
    </location>
</feature>
<feature type="disulfide bond" description="Redox-active; alternate" evidence="1">
    <location>
        <begin position="82"/>
        <end position="89"/>
    </location>
</feature>
<dbReference type="EC" id="1.20.4.4" evidence="1"/>
<dbReference type="EMBL" id="AF422190">
    <property type="protein sequence ID" value="AAN32731.1"/>
    <property type="molecule type" value="Genomic_DNA"/>
</dbReference>
<dbReference type="EMBL" id="AY194063">
    <property type="protein sequence ID" value="AAP32342.1"/>
    <property type="molecule type" value="Genomic_DNA"/>
</dbReference>
<dbReference type="EMBL" id="CP000253">
    <property type="protein sequence ID" value="ABD30957.1"/>
    <property type="molecule type" value="Genomic_DNA"/>
</dbReference>
<dbReference type="RefSeq" id="WP_000163235.1">
    <property type="nucleotide sequence ID" value="NZ_LS483365.1"/>
</dbReference>
<dbReference type="RefSeq" id="YP_500395.1">
    <property type="nucleotide sequence ID" value="NC_007795.1"/>
</dbReference>
<dbReference type="SMR" id="Q2FXF5"/>
<dbReference type="STRING" id="93061.SAOUHSC_01894"/>
<dbReference type="PaxDb" id="1280-SAXN108_1804"/>
<dbReference type="GeneID" id="3920841"/>
<dbReference type="KEGG" id="sao:SAOUHSC_01894"/>
<dbReference type="PATRIC" id="fig|93061.5.peg.1723"/>
<dbReference type="eggNOG" id="COG0394">
    <property type="taxonomic scope" value="Bacteria"/>
</dbReference>
<dbReference type="HOGENOM" id="CLU_071415_3_2_9"/>
<dbReference type="OrthoDB" id="9784339at2"/>
<dbReference type="PRO" id="PR:Q2FXF5"/>
<dbReference type="Proteomes" id="UP000008816">
    <property type="component" value="Chromosome"/>
</dbReference>
<dbReference type="GO" id="GO:0005737">
    <property type="term" value="C:cytoplasm"/>
    <property type="evidence" value="ECO:0007669"/>
    <property type="project" value="UniProtKB-SubCell"/>
</dbReference>
<dbReference type="GO" id="GO:0030612">
    <property type="term" value="F:arsenate reductase (thioredoxin) activity"/>
    <property type="evidence" value="ECO:0007669"/>
    <property type="project" value="UniProtKB-UniRule"/>
</dbReference>
<dbReference type="GO" id="GO:0004725">
    <property type="term" value="F:protein tyrosine phosphatase activity"/>
    <property type="evidence" value="ECO:0007669"/>
    <property type="project" value="InterPro"/>
</dbReference>
<dbReference type="GO" id="GO:0046685">
    <property type="term" value="P:response to arsenic-containing substance"/>
    <property type="evidence" value="ECO:0007669"/>
    <property type="project" value="UniProtKB-KW"/>
</dbReference>
<dbReference type="CDD" id="cd16345">
    <property type="entry name" value="LMWP_ArsC"/>
    <property type="match status" value="1"/>
</dbReference>
<dbReference type="FunFam" id="3.40.50.2300:FF:000237">
    <property type="entry name" value="Arsenate reductase"/>
    <property type="match status" value="1"/>
</dbReference>
<dbReference type="Gene3D" id="3.40.50.2300">
    <property type="match status" value="1"/>
</dbReference>
<dbReference type="HAMAP" id="MF_01624">
    <property type="entry name" value="Arsenate_reduct"/>
    <property type="match status" value="1"/>
</dbReference>
<dbReference type="InterPro" id="IPR014064">
    <property type="entry name" value="Arsenate_reductase_ArsC"/>
</dbReference>
<dbReference type="InterPro" id="IPR023485">
    <property type="entry name" value="Ptyr_pPase"/>
</dbReference>
<dbReference type="InterPro" id="IPR036196">
    <property type="entry name" value="Ptyr_pPase_sf"/>
</dbReference>
<dbReference type="NCBIfam" id="TIGR02691">
    <property type="entry name" value="arsC_pI258_fam"/>
    <property type="match status" value="1"/>
</dbReference>
<dbReference type="NCBIfam" id="NF010053">
    <property type="entry name" value="PRK13530.1"/>
    <property type="match status" value="1"/>
</dbReference>
<dbReference type="PANTHER" id="PTHR43428">
    <property type="entry name" value="ARSENATE REDUCTASE"/>
    <property type="match status" value="1"/>
</dbReference>
<dbReference type="PANTHER" id="PTHR43428:SF1">
    <property type="entry name" value="ARSENATE REDUCTASE"/>
    <property type="match status" value="1"/>
</dbReference>
<dbReference type="Pfam" id="PF01451">
    <property type="entry name" value="LMWPc"/>
    <property type="match status" value="1"/>
</dbReference>
<dbReference type="SMART" id="SM00226">
    <property type="entry name" value="LMWPc"/>
    <property type="match status" value="1"/>
</dbReference>
<dbReference type="SUPFAM" id="SSF52788">
    <property type="entry name" value="Phosphotyrosine protein phosphatases I"/>
    <property type="match status" value="1"/>
</dbReference>
<proteinExistence type="inferred from homology"/>
<keyword id="KW-0059">Arsenical resistance</keyword>
<keyword id="KW-0963">Cytoplasm</keyword>
<keyword id="KW-1015">Disulfide bond</keyword>
<keyword id="KW-0560">Oxidoreductase</keyword>
<keyword id="KW-0676">Redox-active center</keyword>
<keyword id="KW-1185">Reference proteome</keyword>
<protein>
    <recommendedName>
        <fullName evidence="1">Arsenate reductase</fullName>
        <ecNumber evidence="1">1.20.4.4</ecNumber>
    </recommendedName>
</protein>
<comment type="function">
    <text evidence="1">Catalyzes the reduction of arsenate [As(V)] to arsenite [As(III)].</text>
</comment>
<comment type="catalytic activity">
    <reaction evidence="1">
        <text>arsenate + [thioredoxin]-dithiol + H(+) = arsenite + [thioredoxin]-disulfide + H2O</text>
        <dbReference type="Rhea" id="RHEA:43848"/>
        <dbReference type="Rhea" id="RHEA-COMP:10698"/>
        <dbReference type="Rhea" id="RHEA-COMP:10700"/>
        <dbReference type="ChEBI" id="CHEBI:15377"/>
        <dbReference type="ChEBI" id="CHEBI:15378"/>
        <dbReference type="ChEBI" id="CHEBI:29242"/>
        <dbReference type="ChEBI" id="CHEBI:29950"/>
        <dbReference type="ChEBI" id="CHEBI:48597"/>
        <dbReference type="ChEBI" id="CHEBI:50058"/>
        <dbReference type="EC" id="1.20.4.4"/>
    </reaction>
</comment>
<comment type="subcellular location">
    <subcellularLocation>
        <location evidence="1">Cytoplasm</location>
    </subcellularLocation>
</comment>
<comment type="similarity">
    <text evidence="1">Belongs to the low molecular weight phosphotyrosine protein phosphatase family. Thioredoxin-coupled ArsC subfamily.</text>
</comment>
<reference key="1">
    <citation type="submission" date="2001-09" db="EMBL/GenBank/DDBJ databases">
        <authorList>
            <person name="Cramton S.E."/>
            <person name="Richard C."/>
            <person name="Oberfeld B."/>
            <person name="Pfitzner U."/>
            <person name="Gotz F."/>
        </authorList>
    </citation>
    <scope>NUCLEOTIDE SEQUENCE [GENOMIC DNA]</scope>
</reference>
<reference key="2">
    <citation type="submission" date="2002-12" db="EMBL/GenBank/DDBJ databases">
        <authorList>
            <person name="Tibor L."/>
            <person name="Cramton S.E."/>
            <person name="Goetz F."/>
            <person name="Hunt T.K."/>
        </authorList>
    </citation>
    <scope>NUCLEOTIDE SEQUENCE [GENOMIC DNA]</scope>
</reference>
<reference key="3">
    <citation type="book" date="2006" name="Gram positive pathogens, 2nd edition">
        <title>The Staphylococcus aureus NCTC 8325 genome.</title>
        <editorList>
            <person name="Fischetti V."/>
            <person name="Novick R."/>
            <person name="Ferretti J."/>
            <person name="Portnoy D."/>
            <person name="Rood J."/>
        </editorList>
        <authorList>
            <person name="Gillaspy A.F."/>
            <person name="Worrell V."/>
            <person name="Orvis J."/>
            <person name="Roe B.A."/>
            <person name="Dyer D.W."/>
            <person name="Iandolo J.J."/>
        </authorList>
    </citation>
    <scope>NUCLEOTIDE SEQUENCE [LARGE SCALE GENOMIC DNA]</scope>
    <source>
        <strain>NCTC 8325 / PS 47</strain>
    </source>
</reference>
<accession>Q2FXF5</accession>